<proteinExistence type="inferred from homology"/>
<accession>A0A067P1E6</accession>
<name>HYD7_PLEO1</name>
<reference key="1">
    <citation type="journal article" date="2014" name="Proc. Natl. Acad. Sci. U.S.A.">
        <title>Extensive sampling of basidiomycete genomes demonstrates inadequacy of the white-rot/brown-rot paradigm for wood decay fungi.</title>
        <authorList>
            <person name="Riley R."/>
            <person name="Salamov A.A."/>
            <person name="Brown D.W."/>
            <person name="Nagy L.G."/>
            <person name="Floudas D."/>
            <person name="Held B.W."/>
            <person name="Levasseur A."/>
            <person name="Lombard V."/>
            <person name="Morin E."/>
            <person name="Otillar R."/>
            <person name="Lindquist E.A."/>
            <person name="Sun H."/>
            <person name="LaButti K.M."/>
            <person name="Schmutz J."/>
            <person name="Jabbour D."/>
            <person name="Luo H."/>
            <person name="Baker S.E."/>
            <person name="Pisabarro A.G."/>
            <person name="Walton J.D."/>
            <person name="Blanchette R.A."/>
            <person name="Henrissat B."/>
            <person name="Martin F."/>
            <person name="Cullen D."/>
            <person name="Hibbett D.S."/>
            <person name="Grigoriev I.V."/>
        </authorList>
    </citation>
    <scope>NUCLEOTIDE SEQUENCE [LARGE SCALE GENOMIC DNA]</scope>
    <source>
        <strain>PC15</strain>
    </source>
</reference>
<reference key="2">
    <citation type="journal article" date="2021" name="Microbiol. Res.">
        <title>Identification of hydrophobin genes and their physiological functions related to growth and development in Pleurotus ostreatus.</title>
        <authorList>
            <person name="Xu D."/>
            <person name="Wang Y."/>
            <person name="Keerio A.A."/>
            <person name="Ma A."/>
        </authorList>
    </citation>
    <scope>IDENTIFICATION</scope>
</reference>
<evidence type="ECO:0000250" key="1">
    <source>
        <dbReference type="UniProtKB" id="Q04571"/>
    </source>
</evidence>
<evidence type="ECO:0000255" key="2"/>
<evidence type="ECO:0000269" key="3">
    <source>
    </source>
</evidence>
<evidence type="ECO:0000303" key="4">
    <source>
    </source>
</evidence>
<evidence type="ECO:0000305" key="5"/>
<evidence type="ECO:0000305" key="6">
    <source>
    </source>
</evidence>
<organism>
    <name type="scientific">Pleurotus ostreatus (strain PC15)</name>
    <name type="common">Oyster mushroom</name>
    <dbReference type="NCBI Taxonomy" id="1137138"/>
    <lineage>
        <taxon>Eukaryota</taxon>
        <taxon>Fungi</taxon>
        <taxon>Dikarya</taxon>
        <taxon>Basidiomycota</taxon>
        <taxon>Agaricomycotina</taxon>
        <taxon>Agaricomycetes</taxon>
        <taxon>Agaricomycetidae</taxon>
        <taxon>Agaricales</taxon>
        <taxon>Pleurotineae</taxon>
        <taxon>Pleurotaceae</taxon>
        <taxon>Pleurotus</taxon>
    </lineage>
</organism>
<protein>
    <recommendedName>
        <fullName evidence="4">Class I hydrophobin 7</fullName>
    </recommendedName>
</protein>
<sequence length="109" mass="11107">MFAQSFIITALAALAVASPLQVRTSDKCNTGTVHCCNSMKKSDSADISKIASLLQLDVKGVVGDVGLQCSPLVSLVGGGSKCSGQTVCCDQTKFNGLVNIGCSPINVGL</sequence>
<keyword id="KW-0134">Cell wall</keyword>
<keyword id="KW-1015">Disulfide bond</keyword>
<keyword id="KW-1185">Reference proteome</keyword>
<keyword id="KW-0964">Secreted</keyword>
<keyword id="KW-0732">Signal</keyword>
<dbReference type="EMBL" id="KL198006">
    <property type="protein sequence ID" value="KDQ30217.1"/>
    <property type="molecule type" value="Genomic_DNA"/>
</dbReference>
<dbReference type="SMR" id="A0A067P1E6"/>
<dbReference type="VEuPathDB" id="FungiDB:PLEOSDRAFT_154910"/>
<dbReference type="HOGENOM" id="CLU_105134_2_0_1"/>
<dbReference type="InParanoid" id="A0A067P1E6"/>
<dbReference type="OrthoDB" id="138913at5338"/>
<dbReference type="Proteomes" id="UP000027073">
    <property type="component" value="Unassembled WGS sequence"/>
</dbReference>
<dbReference type="GO" id="GO:0005576">
    <property type="term" value="C:extracellular region"/>
    <property type="evidence" value="ECO:0007669"/>
    <property type="project" value="UniProtKB-KW"/>
</dbReference>
<dbReference type="GO" id="GO:0009277">
    <property type="term" value="C:fungal-type cell wall"/>
    <property type="evidence" value="ECO:0007669"/>
    <property type="project" value="InterPro"/>
</dbReference>
<dbReference type="GO" id="GO:0005199">
    <property type="term" value="F:structural constituent of cell wall"/>
    <property type="evidence" value="ECO:0007669"/>
    <property type="project" value="InterPro"/>
</dbReference>
<dbReference type="CDD" id="cd23507">
    <property type="entry name" value="hydrophobin_I"/>
    <property type="match status" value="1"/>
</dbReference>
<dbReference type="InterPro" id="IPR001338">
    <property type="entry name" value="Hydrophobin"/>
</dbReference>
<dbReference type="InterPro" id="IPR019778">
    <property type="entry name" value="Hydrophobin_CS"/>
</dbReference>
<dbReference type="Pfam" id="PF01185">
    <property type="entry name" value="Hydrophobin"/>
    <property type="match status" value="1"/>
</dbReference>
<dbReference type="SMART" id="SM00075">
    <property type="entry name" value="HYDRO"/>
    <property type="match status" value="1"/>
</dbReference>
<dbReference type="PROSITE" id="PS00956">
    <property type="entry name" value="HYDROPHOBIN"/>
    <property type="match status" value="1"/>
</dbReference>
<comment type="function">
    <text evidence="3 5">Aerial growth, conidiation, and dispersal of filamentous fungi in the environment rely upon a capability of their secreting small amphipathic proteins called hydrophobins (HPBs) with low sequence identity. Class I can self-assemble into an outermost layer of rodlet bundles on aerial cell surfaces, conferring cellular hydrophobicity that supports fungal growth, development and dispersal; whereas Class II form highly ordered films at water-air interfaces through intermolecular interactions but contribute nothing to the rodlet structure (Probable). Hydph7 is a class I hydrophobin involved in fruiting body development (PubMed:33636611).</text>
</comment>
<comment type="subunit">
    <text evidence="1">Self-assembles to form functional amyloid fibrils called rodlets. Self-assembly into fibrillar rodlets occurs spontaneously at hydrophobic:hydrophilic interfaces and the rodlets further associate laterally to form amphipathic monolayers.</text>
</comment>
<comment type="subcellular location">
    <subcellularLocation>
        <location evidence="6">Secreted</location>
    </subcellularLocation>
    <subcellularLocation>
        <location evidence="6">Secreted</location>
        <location evidence="6">Cell wall</location>
    </subcellularLocation>
</comment>
<comment type="similarity">
    <text evidence="5">Belongs to the fungal hydrophobin family.</text>
</comment>
<gene>
    <name evidence="4" type="primary">Hydph7</name>
    <name type="ORF">PLEOSDRAFT_154910</name>
</gene>
<feature type="signal peptide" evidence="2">
    <location>
        <begin position="1"/>
        <end position="17"/>
    </location>
</feature>
<feature type="chain" id="PRO_5013987529" description="Class I hydrophobin 7">
    <location>
        <begin position="18"/>
        <end position="109"/>
    </location>
</feature>
<feature type="disulfide bond" evidence="1">
    <location>
        <begin position="28"/>
        <end position="88"/>
    </location>
</feature>
<feature type="disulfide bond" evidence="1">
    <location>
        <begin position="35"/>
        <end position="82"/>
    </location>
</feature>
<feature type="disulfide bond" evidence="1">
    <location>
        <begin position="36"/>
        <end position="69"/>
    </location>
</feature>
<feature type="disulfide bond" evidence="1">
    <location>
        <begin position="89"/>
        <end position="102"/>
    </location>
</feature>